<protein>
    <recommendedName>
        <fullName>SH3 and cysteine-rich domain-containing protein 3</fullName>
    </recommendedName>
</protein>
<gene>
    <name type="primary">stac3</name>
</gene>
<comment type="function">
    <text evidence="1">Required for normal excitation-contraction coupling in skeletal muscle and for normal muscle contraction in response to membrane depolarization. Required for normal Ca(2+) release from the sarcplasmic reticulum, which ultimately leads to muscle contraction. Probably functions via its effects on muscle calcium channels. Increases CACNA1S channel activity, in addition to its role in enhancing the expression of CACNA1S at the cell membrane. Has a redundant role in promoting the expression of the calcium channel CACNA1S at the cell membrane.</text>
</comment>
<comment type="subunit">
    <text evidence="1">Component of a calcium channel complex with CACNA1S.</text>
</comment>
<comment type="subcellular location">
    <subcellularLocation>
        <location evidence="1">Cytoplasm</location>
    </subcellularLocation>
    <subcellularLocation>
        <location evidence="1">Cell membrane</location>
        <location evidence="1">Sarcolemma</location>
        <topology evidence="1">Peripheral membrane protein</topology>
        <orientation evidence="1">Cytoplasmic side</orientation>
    </subcellularLocation>
    <subcellularLocation>
        <location evidence="1">Cell membrane</location>
        <location evidence="1">Sarcolemma</location>
        <location evidence="1">T-tubule</location>
    </subcellularLocation>
</comment>
<sequence length="337" mass="38765">MFKKKAKEEKPSPVPDAQQNGELPNSGPIIYYIYESEEEEEEEEEEPPPEPPRPVNDKPHKFKDHYLKKPKFCDVCARMIVLNNKFGLRCKNCKTNIHHHCQSYVEFQKCFGKIPPGFRRAYSSPLYSNQQNACVKELMPFSASNRTDPVFDTLRVGVIMANKERKKGQDDKKNPMLEEEPEELPPKPEEKQEGDVPDGDKKGEKGGQDAKNKKAQPGFMQSHYFVALYRFKALEKDDLDFQAGERITVIDDSNEEWWRGKVGEKAGYFPANFIIRVRAAERVYKVTRSFVGNREIGQITLKKDQIVVQKGDEVNGYIKVSTGRKVGLFPLDFLQEI</sequence>
<accession>Q68F99</accession>
<evidence type="ECO:0000250" key="1">
    <source>
        <dbReference type="UniProtKB" id="Q8BZ71"/>
    </source>
</evidence>
<evidence type="ECO:0000255" key="2">
    <source>
        <dbReference type="PROSITE-ProRule" id="PRU00192"/>
    </source>
</evidence>
<evidence type="ECO:0000255" key="3">
    <source>
        <dbReference type="PROSITE-ProRule" id="PRU00226"/>
    </source>
</evidence>
<evidence type="ECO:0000256" key="4">
    <source>
        <dbReference type="SAM" id="MobiDB-lite"/>
    </source>
</evidence>
<reference key="1">
    <citation type="submission" date="2004-08" db="EMBL/GenBank/DDBJ databases">
        <authorList>
            <consortium name="NIH - Xenopus Gene Collection (XGC) project"/>
        </authorList>
    </citation>
    <scope>NUCLEOTIDE SEQUENCE [LARGE SCALE MRNA]</scope>
    <source>
        <tissue>Embryo</tissue>
    </source>
</reference>
<keyword id="KW-1003">Cell membrane</keyword>
<keyword id="KW-0963">Cytoplasm</keyword>
<keyword id="KW-0472">Membrane</keyword>
<keyword id="KW-0479">Metal-binding</keyword>
<keyword id="KW-1185">Reference proteome</keyword>
<keyword id="KW-0677">Repeat</keyword>
<keyword id="KW-0728">SH3 domain</keyword>
<keyword id="KW-0862">Zinc</keyword>
<keyword id="KW-0863">Zinc-finger</keyword>
<name>STAC3_XENTR</name>
<dbReference type="EMBL" id="BC079943">
    <property type="protein sequence ID" value="AAH79943.1"/>
    <property type="molecule type" value="mRNA"/>
</dbReference>
<dbReference type="RefSeq" id="NP_001007507.1">
    <property type="nucleotide sequence ID" value="NM_001007506.1"/>
</dbReference>
<dbReference type="SMR" id="Q68F99"/>
<dbReference type="FunCoup" id="Q68F99">
    <property type="interactions" value="5"/>
</dbReference>
<dbReference type="STRING" id="8364.ENSXETP00000001942"/>
<dbReference type="PaxDb" id="8364-ENSXETP00000037412"/>
<dbReference type="DNASU" id="493233"/>
<dbReference type="GeneID" id="493233"/>
<dbReference type="KEGG" id="xtr:493233"/>
<dbReference type="AGR" id="Xenbase:XB-GENE-5903818"/>
<dbReference type="CTD" id="246329"/>
<dbReference type="Xenbase" id="XB-GENE-5903818">
    <property type="gene designation" value="stac3"/>
</dbReference>
<dbReference type="eggNOG" id="ENOG502QT6I">
    <property type="taxonomic scope" value="Eukaryota"/>
</dbReference>
<dbReference type="HOGENOM" id="CLU_048120_1_1_1"/>
<dbReference type="InParanoid" id="Q68F99"/>
<dbReference type="OMA" id="NEEWWRI"/>
<dbReference type="OrthoDB" id="6250593at2759"/>
<dbReference type="PhylomeDB" id="Q68F99"/>
<dbReference type="TreeFam" id="TF332878"/>
<dbReference type="Proteomes" id="UP000008143">
    <property type="component" value="Chromosome 2"/>
</dbReference>
<dbReference type="GO" id="GO:0009898">
    <property type="term" value="C:cytoplasmic side of plasma membrane"/>
    <property type="evidence" value="ECO:0000250"/>
    <property type="project" value="UniProtKB"/>
</dbReference>
<dbReference type="GO" id="GO:0005829">
    <property type="term" value="C:cytosol"/>
    <property type="evidence" value="ECO:0000250"/>
    <property type="project" value="UniProtKB"/>
</dbReference>
<dbReference type="GO" id="GO:0045202">
    <property type="term" value="C:synapse"/>
    <property type="evidence" value="ECO:0007669"/>
    <property type="project" value="GOC"/>
</dbReference>
<dbReference type="GO" id="GO:0030315">
    <property type="term" value="C:T-tubule"/>
    <property type="evidence" value="ECO:0007669"/>
    <property type="project" value="UniProtKB-SubCell"/>
</dbReference>
<dbReference type="GO" id="GO:0005891">
    <property type="term" value="C:voltage-gated calcium channel complex"/>
    <property type="evidence" value="ECO:0000250"/>
    <property type="project" value="UniProtKB"/>
</dbReference>
<dbReference type="GO" id="GO:0008270">
    <property type="term" value="F:zinc ion binding"/>
    <property type="evidence" value="ECO:0007669"/>
    <property type="project" value="UniProtKB-KW"/>
</dbReference>
<dbReference type="GO" id="GO:0007274">
    <property type="term" value="P:neuromuscular synaptic transmission"/>
    <property type="evidence" value="ECO:0000250"/>
    <property type="project" value="UniProtKB"/>
</dbReference>
<dbReference type="GO" id="GO:1903078">
    <property type="term" value="P:positive regulation of protein localization to plasma membrane"/>
    <property type="evidence" value="ECO:0000250"/>
    <property type="project" value="UniProtKB"/>
</dbReference>
<dbReference type="GO" id="GO:1901387">
    <property type="term" value="P:positive regulation of voltage-gated calcium channel activity"/>
    <property type="evidence" value="ECO:0000250"/>
    <property type="project" value="UniProtKB"/>
</dbReference>
<dbReference type="GO" id="GO:0003009">
    <property type="term" value="P:skeletal muscle contraction"/>
    <property type="evidence" value="ECO:0000250"/>
    <property type="project" value="UniProtKB"/>
</dbReference>
<dbReference type="CDD" id="cd20882">
    <property type="entry name" value="C1_Stac3"/>
    <property type="match status" value="1"/>
</dbReference>
<dbReference type="CDD" id="cd11834">
    <property type="entry name" value="SH3_Stac_2"/>
    <property type="match status" value="1"/>
</dbReference>
<dbReference type="FunFam" id="3.30.60.20:FF:000022">
    <property type="entry name" value="SH3 and cysteine-rich domain-containing protein 3 isoform 2"/>
    <property type="match status" value="1"/>
</dbReference>
<dbReference type="FunFam" id="2.30.30.40:FF:000167">
    <property type="entry name" value="SH3 and cysteine-rich domain-containing protein 3 isoform X1"/>
    <property type="match status" value="1"/>
</dbReference>
<dbReference type="Gene3D" id="3.30.60.20">
    <property type="match status" value="1"/>
</dbReference>
<dbReference type="Gene3D" id="2.30.30.40">
    <property type="entry name" value="SH3 Domains"/>
    <property type="match status" value="1"/>
</dbReference>
<dbReference type="InterPro" id="IPR046349">
    <property type="entry name" value="C1-like_sf"/>
</dbReference>
<dbReference type="InterPro" id="IPR002219">
    <property type="entry name" value="PE/DAG-bd"/>
</dbReference>
<dbReference type="InterPro" id="IPR036028">
    <property type="entry name" value="SH3-like_dom_sf"/>
</dbReference>
<dbReference type="InterPro" id="IPR001452">
    <property type="entry name" value="SH3_domain"/>
</dbReference>
<dbReference type="InterPro" id="IPR039688">
    <property type="entry name" value="STAC1/2/3"/>
</dbReference>
<dbReference type="PANTHER" id="PTHR15135:SF2">
    <property type="entry name" value="SH3 AND CYSTEINE-RICH DOMAIN-CONTAINING PROTEIN 3"/>
    <property type="match status" value="1"/>
</dbReference>
<dbReference type="PANTHER" id="PTHR15135">
    <property type="entry name" value="STAC"/>
    <property type="match status" value="1"/>
</dbReference>
<dbReference type="Pfam" id="PF00130">
    <property type="entry name" value="C1_1"/>
    <property type="match status" value="1"/>
</dbReference>
<dbReference type="Pfam" id="PF00018">
    <property type="entry name" value="SH3_1"/>
    <property type="match status" value="1"/>
</dbReference>
<dbReference type="Pfam" id="PF07653">
    <property type="entry name" value="SH3_2"/>
    <property type="match status" value="1"/>
</dbReference>
<dbReference type="Pfam" id="PF16664">
    <property type="entry name" value="STAC2_u1"/>
    <property type="match status" value="1"/>
</dbReference>
<dbReference type="PRINTS" id="PR00499">
    <property type="entry name" value="P67PHOX"/>
</dbReference>
<dbReference type="PRINTS" id="PR00452">
    <property type="entry name" value="SH3DOMAIN"/>
</dbReference>
<dbReference type="SMART" id="SM00109">
    <property type="entry name" value="C1"/>
    <property type="match status" value="1"/>
</dbReference>
<dbReference type="SMART" id="SM00326">
    <property type="entry name" value="SH3"/>
    <property type="match status" value="2"/>
</dbReference>
<dbReference type="SUPFAM" id="SSF57889">
    <property type="entry name" value="Cysteine-rich domain"/>
    <property type="match status" value="1"/>
</dbReference>
<dbReference type="SUPFAM" id="SSF50044">
    <property type="entry name" value="SH3-domain"/>
    <property type="match status" value="2"/>
</dbReference>
<dbReference type="PROSITE" id="PS50002">
    <property type="entry name" value="SH3"/>
    <property type="match status" value="2"/>
</dbReference>
<dbReference type="PROSITE" id="PS00479">
    <property type="entry name" value="ZF_DAG_PE_1"/>
    <property type="match status" value="1"/>
</dbReference>
<dbReference type="PROSITE" id="PS50081">
    <property type="entry name" value="ZF_DAG_PE_2"/>
    <property type="match status" value="1"/>
</dbReference>
<feature type="chain" id="PRO_0000232584" description="SH3 and cysteine-rich domain-containing protein 3">
    <location>
        <begin position="1"/>
        <end position="337"/>
    </location>
</feature>
<feature type="domain" description="SH3 1" evidence="2">
    <location>
        <begin position="220"/>
        <end position="279"/>
    </location>
</feature>
<feature type="domain" description="SH3 2" evidence="2">
    <location>
        <begin position="280"/>
        <end position="337"/>
    </location>
</feature>
<feature type="zinc finger region" description="Phorbol-ester/DAG-type" evidence="3">
    <location>
        <begin position="59"/>
        <end position="110"/>
    </location>
</feature>
<feature type="region of interest" description="Disordered" evidence="4">
    <location>
        <begin position="1"/>
        <end position="61"/>
    </location>
</feature>
<feature type="region of interest" description="Disordered" evidence="4">
    <location>
        <begin position="162"/>
        <end position="215"/>
    </location>
</feature>
<feature type="compositionally biased region" description="Basic and acidic residues" evidence="4">
    <location>
        <begin position="1"/>
        <end position="11"/>
    </location>
</feature>
<feature type="compositionally biased region" description="Acidic residues" evidence="4">
    <location>
        <begin position="35"/>
        <end position="48"/>
    </location>
</feature>
<feature type="compositionally biased region" description="Basic and acidic residues" evidence="4">
    <location>
        <begin position="167"/>
        <end position="176"/>
    </location>
</feature>
<feature type="compositionally biased region" description="Basic and acidic residues" evidence="4">
    <location>
        <begin position="184"/>
        <end position="212"/>
    </location>
</feature>
<organism>
    <name type="scientific">Xenopus tropicalis</name>
    <name type="common">Western clawed frog</name>
    <name type="synonym">Silurana tropicalis</name>
    <dbReference type="NCBI Taxonomy" id="8364"/>
    <lineage>
        <taxon>Eukaryota</taxon>
        <taxon>Metazoa</taxon>
        <taxon>Chordata</taxon>
        <taxon>Craniata</taxon>
        <taxon>Vertebrata</taxon>
        <taxon>Euteleostomi</taxon>
        <taxon>Amphibia</taxon>
        <taxon>Batrachia</taxon>
        <taxon>Anura</taxon>
        <taxon>Pipoidea</taxon>
        <taxon>Pipidae</taxon>
        <taxon>Xenopodinae</taxon>
        <taxon>Xenopus</taxon>
        <taxon>Silurana</taxon>
    </lineage>
</organism>
<proteinExistence type="evidence at transcript level"/>